<sequence>MSADLARIAEEVSHRRTFAIISHPDAGKTTLTEKLLLFSGAIQMAGTVKGKKGGKFATSDWMEIEKQRGISVASSVMQFDYRDHTVNLLDTPGHQDFSEDTYRVLTAVDSALMVIDAAKGVEEQTIKLLNVCRLRNTPIVTFMNKCDREVRDSLELLDEVENVLKIRCAPITWPIGMGKTFRGVYSLLSDAVILFEAGTEKLVSDIEVIQGIDNPRLDELFPLEMEQLRMEIELVKGASNEWSLEEFLAGELTPVFFGSAINNFGVREILNALIDWAPAPQERDATVRNVDPKEAKFSGFVFKIQANMDPKHRDRIAFLRVCSGQFERGMKMKHLRLNRDIAASSVVTFMSHDREIVEEAFAGDIIGIPNHGNIQIGDSFSEGEDLAFTGIPFFAPELFRSVRIKNPLKLKQLQKGLQQLGEEGAVQVFKPHSGGDLILGAVGVLQFEVVASRLAAEYGVDAIFESASIWSARWFSCDDRKKLDEFVKTLQMNIATDAGGNLAYLAPNRVNLQLTQERWPDIVFHETREHAVKLND</sequence>
<proteinExistence type="inferred from homology"/>
<organism>
    <name type="scientific">Chromobacterium violaceum (strain ATCC 12472 / DSM 30191 / JCM 1249 / CCUG 213 / NBRC 12614 / NCIMB 9131 / NCTC 9757 / MK)</name>
    <dbReference type="NCBI Taxonomy" id="243365"/>
    <lineage>
        <taxon>Bacteria</taxon>
        <taxon>Pseudomonadati</taxon>
        <taxon>Pseudomonadota</taxon>
        <taxon>Betaproteobacteria</taxon>
        <taxon>Neisseriales</taxon>
        <taxon>Chromobacteriaceae</taxon>
        <taxon>Chromobacterium</taxon>
    </lineage>
</organism>
<dbReference type="EMBL" id="AE016825">
    <property type="protein sequence ID" value="AAQ60058.1"/>
    <property type="molecule type" value="Genomic_DNA"/>
</dbReference>
<dbReference type="RefSeq" id="WP_011135933.1">
    <property type="nucleotide sequence ID" value="NC_005085.1"/>
</dbReference>
<dbReference type="SMR" id="Q7NVF7"/>
<dbReference type="STRING" id="243365.CV_2386"/>
<dbReference type="KEGG" id="cvi:CV_2386"/>
<dbReference type="eggNOG" id="COG4108">
    <property type="taxonomic scope" value="Bacteria"/>
</dbReference>
<dbReference type="HOGENOM" id="CLU_002794_2_1_4"/>
<dbReference type="OrthoDB" id="9804431at2"/>
<dbReference type="Proteomes" id="UP000001424">
    <property type="component" value="Chromosome"/>
</dbReference>
<dbReference type="GO" id="GO:0005829">
    <property type="term" value="C:cytosol"/>
    <property type="evidence" value="ECO:0007669"/>
    <property type="project" value="TreeGrafter"/>
</dbReference>
<dbReference type="GO" id="GO:0005525">
    <property type="term" value="F:GTP binding"/>
    <property type="evidence" value="ECO:0007669"/>
    <property type="project" value="UniProtKB-UniRule"/>
</dbReference>
<dbReference type="GO" id="GO:0003924">
    <property type="term" value="F:GTPase activity"/>
    <property type="evidence" value="ECO:0007669"/>
    <property type="project" value="InterPro"/>
</dbReference>
<dbReference type="GO" id="GO:0016150">
    <property type="term" value="F:translation release factor activity, codon nonspecific"/>
    <property type="evidence" value="ECO:0007669"/>
    <property type="project" value="TreeGrafter"/>
</dbReference>
<dbReference type="GO" id="GO:0016149">
    <property type="term" value="F:translation release factor activity, codon specific"/>
    <property type="evidence" value="ECO:0007669"/>
    <property type="project" value="UniProtKB-UniRule"/>
</dbReference>
<dbReference type="GO" id="GO:0006449">
    <property type="term" value="P:regulation of translational termination"/>
    <property type="evidence" value="ECO:0007669"/>
    <property type="project" value="UniProtKB-UniRule"/>
</dbReference>
<dbReference type="CDD" id="cd04169">
    <property type="entry name" value="RF3"/>
    <property type="match status" value="1"/>
</dbReference>
<dbReference type="CDD" id="cd03689">
    <property type="entry name" value="RF3_II"/>
    <property type="match status" value="1"/>
</dbReference>
<dbReference type="CDD" id="cd16259">
    <property type="entry name" value="RF3_III"/>
    <property type="match status" value="1"/>
</dbReference>
<dbReference type="FunFam" id="2.40.30.10:FF:000040">
    <property type="entry name" value="Peptide chain release factor 3"/>
    <property type="match status" value="1"/>
</dbReference>
<dbReference type="FunFam" id="3.30.70.3280:FF:000001">
    <property type="entry name" value="Peptide chain release factor 3"/>
    <property type="match status" value="1"/>
</dbReference>
<dbReference type="FunFam" id="3.40.50.300:FF:000542">
    <property type="entry name" value="Peptide chain release factor 3"/>
    <property type="match status" value="1"/>
</dbReference>
<dbReference type="Gene3D" id="3.40.50.300">
    <property type="entry name" value="P-loop containing nucleotide triphosphate hydrolases"/>
    <property type="match status" value="2"/>
</dbReference>
<dbReference type="Gene3D" id="3.30.70.3280">
    <property type="entry name" value="Peptide chain release factor 3, domain III"/>
    <property type="match status" value="1"/>
</dbReference>
<dbReference type="HAMAP" id="MF_00072">
    <property type="entry name" value="Rel_fac_3"/>
    <property type="match status" value="1"/>
</dbReference>
<dbReference type="InterPro" id="IPR053905">
    <property type="entry name" value="EF-G-like_DII"/>
</dbReference>
<dbReference type="InterPro" id="IPR035647">
    <property type="entry name" value="EFG_III/V"/>
</dbReference>
<dbReference type="InterPro" id="IPR031157">
    <property type="entry name" value="G_TR_CS"/>
</dbReference>
<dbReference type="InterPro" id="IPR027417">
    <property type="entry name" value="P-loop_NTPase"/>
</dbReference>
<dbReference type="InterPro" id="IPR004548">
    <property type="entry name" value="PrfC"/>
</dbReference>
<dbReference type="InterPro" id="IPR032090">
    <property type="entry name" value="RF3_C"/>
</dbReference>
<dbReference type="InterPro" id="IPR038467">
    <property type="entry name" value="RF3_dom_3_sf"/>
</dbReference>
<dbReference type="InterPro" id="IPR041732">
    <property type="entry name" value="RF3_GTP-bd"/>
</dbReference>
<dbReference type="InterPro" id="IPR005225">
    <property type="entry name" value="Small_GTP-bd"/>
</dbReference>
<dbReference type="InterPro" id="IPR000795">
    <property type="entry name" value="T_Tr_GTP-bd_dom"/>
</dbReference>
<dbReference type="InterPro" id="IPR009000">
    <property type="entry name" value="Transl_B-barrel_sf"/>
</dbReference>
<dbReference type="NCBIfam" id="TIGR00503">
    <property type="entry name" value="prfC"/>
    <property type="match status" value="1"/>
</dbReference>
<dbReference type="NCBIfam" id="NF001964">
    <property type="entry name" value="PRK00741.1"/>
    <property type="match status" value="1"/>
</dbReference>
<dbReference type="NCBIfam" id="TIGR00231">
    <property type="entry name" value="small_GTP"/>
    <property type="match status" value="1"/>
</dbReference>
<dbReference type="PANTHER" id="PTHR43556">
    <property type="entry name" value="PEPTIDE CHAIN RELEASE FACTOR RF3"/>
    <property type="match status" value="1"/>
</dbReference>
<dbReference type="PANTHER" id="PTHR43556:SF2">
    <property type="entry name" value="PEPTIDE CHAIN RELEASE FACTOR RF3"/>
    <property type="match status" value="1"/>
</dbReference>
<dbReference type="Pfam" id="PF22042">
    <property type="entry name" value="EF-G_D2"/>
    <property type="match status" value="1"/>
</dbReference>
<dbReference type="Pfam" id="PF00009">
    <property type="entry name" value="GTP_EFTU"/>
    <property type="match status" value="1"/>
</dbReference>
<dbReference type="Pfam" id="PF16658">
    <property type="entry name" value="RF3_C"/>
    <property type="match status" value="1"/>
</dbReference>
<dbReference type="PRINTS" id="PR00315">
    <property type="entry name" value="ELONGATNFCT"/>
</dbReference>
<dbReference type="SUPFAM" id="SSF54980">
    <property type="entry name" value="EF-G C-terminal domain-like"/>
    <property type="match status" value="1"/>
</dbReference>
<dbReference type="SUPFAM" id="SSF52540">
    <property type="entry name" value="P-loop containing nucleoside triphosphate hydrolases"/>
    <property type="match status" value="1"/>
</dbReference>
<dbReference type="SUPFAM" id="SSF50447">
    <property type="entry name" value="Translation proteins"/>
    <property type="match status" value="1"/>
</dbReference>
<dbReference type="PROSITE" id="PS00301">
    <property type="entry name" value="G_TR_1"/>
    <property type="match status" value="1"/>
</dbReference>
<dbReference type="PROSITE" id="PS51722">
    <property type="entry name" value="G_TR_2"/>
    <property type="match status" value="1"/>
</dbReference>
<gene>
    <name evidence="1" type="primary">prfC</name>
    <name type="ordered locus">CV_2386</name>
</gene>
<name>RF3_CHRVO</name>
<keyword id="KW-0963">Cytoplasm</keyword>
<keyword id="KW-0342">GTP-binding</keyword>
<keyword id="KW-0547">Nucleotide-binding</keyword>
<keyword id="KW-0648">Protein biosynthesis</keyword>
<keyword id="KW-1185">Reference proteome</keyword>
<accession>Q7NVF7</accession>
<feature type="chain" id="PRO_0000210936" description="Peptide chain release factor 3">
    <location>
        <begin position="1"/>
        <end position="536"/>
    </location>
</feature>
<feature type="domain" description="tr-type G">
    <location>
        <begin position="13"/>
        <end position="281"/>
    </location>
</feature>
<feature type="binding site" evidence="1">
    <location>
        <begin position="22"/>
        <end position="29"/>
    </location>
    <ligand>
        <name>GTP</name>
        <dbReference type="ChEBI" id="CHEBI:37565"/>
    </ligand>
</feature>
<feature type="binding site" evidence="1">
    <location>
        <begin position="90"/>
        <end position="94"/>
    </location>
    <ligand>
        <name>GTP</name>
        <dbReference type="ChEBI" id="CHEBI:37565"/>
    </ligand>
</feature>
<feature type="binding site" evidence="1">
    <location>
        <begin position="144"/>
        <end position="147"/>
    </location>
    <ligand>
        <name>GTP</name>
        <dbReference type="ChEBI" id="CHEBI:37565"/>
    </ligand>
</feature>
<reference key="1">
    <citation type="journal article" date="2003" name="Proc. Natl. Acad. Sci. U.S.A.">
        <title>The complete genome sequence of Chromobacterium violaceum reveals remarkable and exploitable bacterial adaptability.</title>
        <authorList>
            <person name="Vasconcelos A.T.R."/>
            <person name="de Almeida D.F."/>
            <person name="Hungria M."/>
            <person name="Guimaraes C.T."/>
            <person name="Antonio R.V."/>
            <person name="Almeida F.C."/>
            <person name="de Almeida L.G.P."/>
            <person name="de Almeida R."/>
            <person name="Alves-Gomes J.A."/>
            <person name="Andrade E.M."/>
            <person name="Araripe J."/>
            <person name="de Araujo M.F.F."/>
            <person name="Astolfi-Filho S."/>
            <person name="Azevedo V."/>
            <person name="Baptista A.J."/>
            <person name="Bataus L.A.M."/>
            <person name="Batista J.S."/>
            <person name="Belo A."/>
            <person name="van den Berg C."/>
            <person name="Bogo M."/>
            <person name="Bonatto S."/>
            <person name="Bordignon J."/>
            <person name="Brigido M.M."/>
            <person name="Brito C.A."/>
            <person name="Brocchi M."/>
            <person name="Burity H.A."/>
            <person name="Camargo A.A."/>
            <person name="Cardoso D.D.P."/>
            <person name="Carneiro N.P."/>
            <person name="Carraro D.M."/>
            <person name="Carvalho C.M.B."/>
            <person name="Cascardo J.C.M."/>
            <person name="Cavada B.S."/>
            <person name="Chueire L.M.O."/>
            <person name="Creczynski-Pasa T.B."/>
            <person name="Cunha-Junior N.C."/>
            <person name="Fagundes N."/>
            <person name="Falcao C.L."/>
            <person name="Fantinatti F."/>
            <person name="Farias I.P."/>
            <person name="Felipe M.S.S."/>
            <person name="Ferrari L.P."/>
            <person name="Ferro J.A."/>
            <person name="Ferro M.I.T."/>
            <person name="Franco G.R."/>
            <person name="Freitas N.S.A."/>
            <person name="Furlan L.R."/>
            <person name="Gazzinelli R.T."/>
            <person name="Gomes E.A."/>
            <person name="Goncalves P.R."/>
            <person name="Grangeiro T.B."/>
            <person name="Grattapaglia D."/>
            <person name="Grisard E.C."/>
            <person name="Hanna E.S."/>
            <person name="Jardim S.N."/>
            <person name="Laurino J."/>
            <person name="Leoi L.C.T."/>
            <person name="Lima L.F.A."/>
            <person name="Loureiro M.F."/>
            <person name="Lyra M.C.C.P."/>
            <person name="Madeira H.M.F."/>
            <person name="Manfio G.P."/>
            <person name="Maranhao A.Q."/>
            <person name="Martins W.S."/>
            <person name="di Mauro S.M.Z."/>
            <person name="de Medeiros S.R.B."/>
            <person name="Meissner R.V."/>
            <person name="Moreira M.A.M."/>
            <person name="Nascimento F.F."/>
            <person name="Nicolas M.F."/>
            <person name="Oliveira J.G."/>
            <person name="Oliveira S.C."/>
            <person name="Paixao R.F.C."/>
            <person name="Parente J.A."/>
            <person name="Pedrosa F.O."/>
            <person name="Pena S.D.J."/>
            <person name="Pereira J.O."/>
            <person name="Pereira M."/>
            <person name="Pinto L.S.R.C."/>
            <person name="Pinto L.S."/>
            <person name="Porto J.I.R."/>
            <person name="Potrich D.P."/>
            <person name="Ramalho-Neto C.E."/>
            <person name="Reis A.M.M."/>
            <person name="Rigo L.U."/>
            <person name="Rondinelli E."/>
            <person name="Santos E.B.P."/>
            <person name="Santos F.R."/>
            <person name="Schneider M.P.C."/>
            <person name="Seuanez H.N."/>
            <person name="Silva A.M.R."/>
            <person name="da Silva A.L.C."/>
            <person name="Silva D.W."/>
            <person name="Silva R."/>
            <person name="Simoes I.C."/>
            <person name="Simon D."/>
            <person name="Soares C.M.A."/>
            <person name="Soares R.B.A."/>
            <person name="Souza E.M."/>
            <person name="Souza K.R.L."/>
            <person name="Souza R.C."/>
            <person name="Steffens M.B.R."/>
            <person name="Steindel M."/>
            <person name="Teixeira S.R."/>
            <person name="Urmenyi T."/>
            <person name="Vettore A."/>
            <person name="Wassem R."/>
            <person name="Zaha A."/>
            <person name="Simpson A.J.G."/>
        </authorList>
    </citation>
    <scope>NUCLEOTIDE SEQUENCE [LARGE SCALE GENOMIC DNA]</scope>
    <source>
        <strain>ATCC 12472 / DSM 30191 / JCM 1249 / CCUG 213 / NBRC 12614 / NCIMB 9131 / NCTC 9757 / MK</strain>
    </source>
</reference>
<comment type="function">
    <text evidence="1">Increases the formation of ribosomal termination complexes and stimulates activities of RF-1 and RF-2. It binds guanine nucleotides and has strong preference for UGA stop codons. It may interact directly with the ribosome. The stimulation of RF-1 and RF-2 is significantly reduced by GTP and GDP, but not by GMP.</text>
</comment>
<comment type="subcellular location">
    <subcellularLocation>
        <location evidence="1">Cytoplasm</location>
    </subcellularLocation>
</comment>
<comment type="similarity">
    <text evidence="1">Belongs to the TRAFAC class translation factor GTPase superfamily. Classic translation factor GTPase family. PrfC subfamily.</text>
</comment>
<evidence type="ECO:0000255" key="1">
    <source>
        <dbReference type="HAMAP-Rule" id="MF_00072"/>
    </source>
</evidence>
<protein>
    <recommendedName>
        <fullName evidence="1">Peptide chain release factor 3</fullName>
        <shortName evidence="1">RF-3</shortName>
    </recommendedName>
</protein>